<keyword id="KW-0004">4Fe-4S</keyword>
<keyword id="KW-0408">Iron</keyword>
<keyword id="KW-0411">Iron-sulfur</keyword>
<keyword id="KW-0479">Metal-binding</keyword>
<keyword id="KW-0560">Oxidoreductase</keyword>
<keyword id="KW-1185">Reference proteome</keyword>
<keyword id="KW-0677">Repeat</keyword>
<keyword id="KW-0949">S-adenosyl-L-methionine</keyword>
<protein>
    <recommendedName>
        <fullName evidence="8">Isethionate sulfite-lyase activating enzyme</fullName>
        <ecNumber evidence="8">1.97.1.-</ecNumber>
    </recommendedName>
    <alternativeName>
        <fullName evidence="6">GRE activase IslB</fullName>
    </alternativeName>
    <alternativeName>
        <fullName>Glycyl-radical enzyme activating enzyme IslB</fullName>
    </alternativeName>
</protein>
<feature type="chain" id="PRO_0000450945" description="Isethionate sulfite-lyase activating enzyme">
    <location>
        <begin position="1"/>
        <end position="312"/>
    </location>
</feature>
<feature type="domain" description="Radical SAM core" evidence="4">
    <location>
        <begin position="22"/>
        <end position="309"/>
    </location>
</feature>
<feature type="domain" description="4Fe-4S ferredoxin-type 1" evidence="3">
    <location>
        <begin position="53"/>
        <end position="82"/>
    </location>
</feature>
<feature type="domain" description="4Fe-4S ferredoxin-type 2" evidence="3">
    <location>
        <begin position="83"/>
        <end position="115"/>
    </location>
</feature>
<feature type="binding site" evidence="4">
    <location>
        <position position="36"/>
    </location>
    <ligand>
        <name>[4Fe-4S] cluster</name>
        <dbReference type="ChEBI" id="CHEBI:49883"/>
        <label>1</label>
        <note>4Fe-4S-S-AdoMet</note>
    </ligand>
</feature>
<feature type="binding site" evidence="4">
    <location>
        <position position="40"/>
    </location>
    <ligand>
        <name>[4Fe-4S] cluster</name>
        <dbReference type="ChEBI" id="CHEBI:49883"/>
        <label>1</label>
        <note>4Fe-4S-S-AdoMet</note>
    </ligand>
</feature>
<feature type="binding site" evidence="1">
    <location>
        <begin position="42"/>
        <end position="44"/>
    </location>
    <ligand>
        <name>S-adenosyl-L-methionine</name>
        <dbReference type="ChEBI" id="CHEBI:59789"/>
    </ligand>
</feature>
<feature type="binding site" evidence="4">
    <location>
        <position position="43"/>
    </location>
    <ligand>
        <name>[4Fe-4S] cluster</name>
        <dbReference type="ChEBI" id="CHEBI:49883"/>
        <label>1</label>
        <note>4Fe-4S-S-AdoMet</note>
    </ligand>
</feature>
<feature type="binding site" evidence="3">
    <location>
        <position position="62"/>
    </location>
    <ligand>
        <name>[4Fe-4S] cluster</name>
        <dbReference type="ChEBI" id="CHEBI:49883"/>
        <label>2</label>
    </ligand>
</feature>
<feature type="binding site" evidence="3">
    <location>
        <position position="65"/>
    </location>
    <ligand>
        <name>[4Fe-4S] cluster</name>
        <dbReference type="ChEBI" id="CHEBI:49883"/>
        <label>2</label>
    </ligand>
</feature>
<feature type="binding site" evidence="3">
    <location>
        <position position="68"/>
    </location>
    <ligand>
        <name>[4Fe-4S] cluster</name>
        <dbReference type="ChEBI" id="CHEBI:49883"/>
        <label>2</label>
    </ligand>
</feature>
<feature type="binding site" evidence="3">
    <location>
        <position position="72"/>
    </location>
    <ligand>
        <name>[4Fe-4S] cluster</name>
        <dbReference type="ChEBI" id="CHEBI:49883"/>
        <label>3</label>
    </ligand>
</feature>
<feature type="binding site" evidence="3">
    <location>
        <position position="92"/>
    </location>
    <ligand>
        <name>[4Fe-4S] cluster</name>
        <dbReference type="ChEBI" id="CHEBI:49883"/>
        <label>3</label>
    </ligand>
</feature>
<feature type="binding site" evidence="3">
    <location>
        <position position="95"/>
    </location>
    <ligand>
        <name>[4Fe-4S] cluster</name>
        <dbReference type="ChEBI" id="CHEBI:49883"/>
        <label>3</label>
    </ligand>
</feature>
<feature type="binding site" evidence="3">
    <location>
        <position position="100"/>
    </location>
    <ligand>
        <name>[4Fe-4S] cluster</name>
        <dbReference type="ChEBI" id="CHEBI:49883"/>
        <label>3</label>
    </ligand>
</feature>
<feature type="binding site" evidence="3">
    <location>
        <position position="104"/>
    </location>
    <ligand>
        <name>[4Fe-4S] cluster</name>
        <dbReference type="ChEBI" id="CHEBI:49883"/>
        <label>2</label>
    </ligand>
</feature>
<feature type="binding site" evidence="1">
    <location>
        <position position="144"/>
    </location>
    <ligand>
        <name>S-adenosyl-L-methionine</name>
        <dbReference type="ChEBI" id="CHEBI:59789"/>
    </ligand>
</feature>
<feature type="binding site" evidence="1">
    <location>
        <begin position="193"/>
        <end position="195"/>
    </location>
    <ligand>
        <name>S-adenosyl-L-methionine</name>
        <dbReference type="ChEBI" id="CHEBI:59789"/>
    </ligand>
</feature>
<feature type="binding site" evidence="1">
    <location>
        <position position="267"/>
    </location>
    <ligand>
        <name>S-adenosyl-L-methionine</name>
        <dbReference type="ChEBI" id="CHEBI:59789"/>
    </ligand>
</feature>
<dbReference type="EC" id="1.97.1.-" evidence="8"/>
<dbReference type="EMBL" id="ADCP02000001">
    <property type="protein sequence ID" value="EFV45543.1"/>
    <property type="molecule type" value="Genomic_DNA"/>
</dbReference>
<dbReference type="RefSeq" id="WP_005024905.1">
    <property type="nucleotide sequence ID" value="NZ_KE150238.1"/>
</dbReference>
<dbReference type="SMR" id="E5Y377"/>
<dbReference type="STRING" id="563192.HMPREF0179_00638"/>
<dbReference type="GeneID" id="78085780"/>
<dbReference type="eggNOG" id="COG1180">
    <property type="taxonomic scope" value="Bacteria"/>
</dbReference>
<dbReference type="HOGENOM" id="CLU_058969_0_0_7"/>
<dbReference type="OrthoDB" id="9782387at2"/>
<dbReference type="UniPathway" id="UPA00338"/>
<dbReference type="Proteomes" id="UP000006034">
    <property type="component" value="Unassembled WGS sequence"/>
</dbReference>
<dbReference type="GO" id="GO:0051539">
    <property type="term" value="F:4 iron, 4 sulfur cluster binding"/>
    <property type="evidence" value="ECO:0007669"/>
    <property type="project" value="UniProtKB-KW"/>
</dbReference>
<dbReference type="GO" id="GO:0046872">
    <property type="term" value="F:metal ion binding"/>
    <property type="evidence" value="ECO:0007669"/>
    <property type="project" value="UniProtKB-KW"/>
</dbReference>
<dbReference type="GO" id="GO:0016491">
    <property type="term" value="F:oxidoreductase activity"/>
    <property type="evidence" value="ECO:0007669"/>
    <property type="project" value="UniProtKB-KW"/>
</dbReference>
<dbReference type="GO" id="GO:0046306">
    <property type="term" value="P:alkanesulfonate catabolic process"/>
    <property type="evidence" value="ECO:0007669"/>
    <property type="project" value="UniProtKB-UniPathway"/>
</dbReference>
<dbReference type="Gene3D" id="3.30.70.20">
    <property type="match status" value="1"/>
</dbReference>
<dbReference type="Gene3D" id="3.20.20.70">
    <property type="entry name" value="Aldolase class I"/>
    <property type="match status" value="1"/>
</dbReference>
<dbReference type="InterPro" id="IPR017896">
    <property type="entry name" value="4Fe4S_Fe-S-bd"/>
</dbReference>
<dbReference type="InterPro" id="IPR017900">
    <property type="entry name" value="4Fe4S_Fe_S_CS"/>
</dbReference>
<dbReference type="InterPro" id="IPR013785">
    <property type="entry name" value="Aldolase_TIM"/>
</dbReference>
<dbReference type="InterPro" id="IPR040074">
    <property type="entry name" value="BssD/PflA/YjjW"/>
</dbReference>
<dbReference type="InterPro" id="IPR034457">
    <property type="entry name" value="Organic_radical-activating"/>
</dbReference>
<dbReference type="InterPro" id="IPR012839">
    <property type="entry name" value="Organic_radical_activase"/>
</dbReference>
<dbReference type="InterPro" id="IPR001989">
    <property type="entry name" value="Radical_activat_CS"/>
</dbReference>
<dbReference type="InterPro" id="IPR007197">
    <property type="entry name" value="rSAM"/>
</dbReference>
<dbReference type="NCBIfam" id="TIGR02494">
    <property type="entry name" value="PFLE_PFLC"/>
    <property type="match status" value="1"/>
</dbReference>
<dbReference type="PANTHER" id="PTHR30352:SF4">
    <property type="entry name" value="PYRUVATE FORMATE-LYASE 2-ACTIVATING ENZYME"/>
    <property type="match status" value="1"/>
</dbReference>
<dbReference type="PANTHER" id="PTHR30352">
    <property type="entry name" value="PYRUVATE FORMATE-LYASE-ACTIVATING ENZYME"/>
    <property type="match status" value="1"/>
</dbReference>
<dbReference type="Pfam" id="PF13353">
    <property type="entry name" value="Fer4_12"/>
    <property type="match status" value="1"/>
</dbReference>
<dbReference type="Pfam" id="PF04055">
    <property type="entry name" value="Radical_SAM"/>
    <property type="match status" value="1"/>
</dbReference>
<dbReference type="PIRSF" id="PIRSF000371">
    <property type="entry name" value="PFL_act_enz"/>
    <property type="match status" value="1"/>
</dbReference>
<dbReference type="SFLD" id="SFLDG01118">
    <property type="entry name" value="activating_enzymes__group_2"/>
    <property type="match status" value="1"/>
</dbReference>
<dbReference type="SFLD" id="SFLDS00029">
    <property type="entry name" value="Radical_SAM"/>
    <property type="match status" value="1"/>
</dbReference>
<dbReference type="SUPFAM" id="SSF54862">
    <property type="entry name" value="4Fe-4S ferredoxins"/>
    <property type="match status" value="1"/>
</dbReference>
<dbReference type="SUPFAM" id="SSF102114">
    <property type="entry name" value="Radical SAM enzymes"/>
    <property type="match status" value="1"/>
</dbReference>
<dbReference type="PROSITE" id="PS00198">
    <property type="entry name" value="4FE4S_FER_1"/>
    <property type="match status" value="1"/>
</dbReference>
<dbReference type="PROSITE" id="PS51379">
    <property type="entry name" value="4FE4S_FER_2"/>
    <property type="match status" value="2"/>
</dbReference>
<dbReference type="PROSITE" id="PS01087">
    <property type="entry name" value="RADICAL_ACTIVATING"/>
    <property type="match status" value="1"/>
</dbReference>
<dbReference type="PROSITE" id="PS51918">
    <property type="entry name" value="RADICAL_SAM"/>
    <property type="match status" value="1"/>
</dbReference>
<evidence type="ECO:0000250" key="1">
    <source>
        <dbReference type="UniProtKB" id="P0A9N4"/>
    </source>
</evidence>
<evidence type="ECO:0000250" key="2">
    <source>
        <dbReference type="UniProtKB" id="Q30W71"/>
    </source>
</evidence>
<evidence type="ECO:0000255" key="3">
    <source>
        <dbReference type="PROSITE-ProRule" id="PRU00711"/>
    </source>
</evidence>
<evidence type="ECO:0000255" key="4">
    <source>
        <dbReference type="PROSITE-ProRule" id="PRU01266"/>
    </source>
</evidence>
<evidence type="ECO:0000269" key="5">
    <source>
    </source>
</evidence>
<evidence type="ECO:0000303" key="6">
    <source>
    </source>
</evidence>
<evidence type="ECO:0000305" key="7"/>
<evidence type="ECO:0000305" key="8">
    <source>
    </source>
</evidence>
<evidence type="ECO:0000312" key="9">
    <source>
        <dbReference type="EMBL" id="EFV45543.1"/>
    </source>
</evidence>
<proteinExistence type="evidence at protein level"/>
<organism>
    <name type="scientific">Bilophila wadsworthia (strain 3_1_6)</name>
    <dbReference type="NCBI Taxonomy" id="563192"/>
    <lineage>
        <taxon>Bacteria</taxon>
        <taxon>Pseudomonadati</taxon>
        <taxon>Thermodesulfobacteriota</taxon>
        <taxon>Desulfovibrionia</taxon>
        <taxon>Desulfovibrionales</taxon>
        <taxon>Desulfovibrionaceae</taxon>
        <taxon>Bilophila</taxon>
    </lineage>
</organism>
<reference key="1">
    <citation type="submission" date="2013-04" db="EMBL/GenBank/DDBJ databases">
        <title>The Genome Sequence of Bilophila wadsworthia 3_1_6.</title>
        <authorList>
            <consortium name="The Broad Institute Genomics Platform"/>
            <person name="Earl A."/>
            <person name="Ward D."/>
            <person name="Feldgarden M."/>
            <person name="Gevers D."/>
            <person name="Sibley C."/>
            <person name="Strauss J."/>
            <person name="Allen-Vercoe E."/>
            <person name="Walker B."/>
            <person name="Young S."/>
            <person name="Zeng Q."/>
            <person name="Gargeya S."/>
            <person name="Fitzgerald M."/>
            <person name="Haas B."/>
            <person name="Abouelleil A."/>
            <person name="Allen A.W."/>
            <person name="Alvarado L."/>
            <person name="Arachchi H.M."/>
            <person name="Berlin A.M."/>
            <person name="Chapman S.B."/>
            <person name="Gainer-Dewar J."/>
            <person name="Goldberg J."/>
            <person name="Griggs A."/>
            <person name="Gujja S."/>
            <person name="Hansen M."/>
            <person name="Howarth C."/>
            <person name="Imamovic A."/>
            <person name="Ireland A."/>
            <person name="Larimer J."/>
            <person name="McCowan C."/>
            <person name="Murphy C."/>
            <person name="Pearson M."/>
            <person name="Poon T.W."/>
            <person name="Priest M."/>
            <person name="Roberts A."/>
            <person name="Saif S."/>
            <person name="Shea T."/>
            <person name="Sisk P."/>
            <person name="Sykes S."/>
            <person name="Wortman J."/>
            <person name="Nusbaum C."/>
            <person name="Birren B."/>
        </authorList>
    </citation>
    <scope>NUCLEOTIDE SEQUENCE [LARGE SCALE GENOMIC DNA]</scope>
    <source>
        <strain>3_1_6</strain>
    </source>
</reference>
<reference key="2">
    <citation type="journal article" date="2019" name="Proc. Natl. Acad. Sci. U.S.A.">
        <title>A glycyl radical enzyme enables hydrogen sulfide production by the human intestinal bacterium Bilophila wadsworthia.</title>
        <authorList>
            <person name="Peck S.C."/>
            <person name="Denger K."/>
            <person name="Burrichter A."/>
            <person name="Irwin S.M."/>
            <person name="Balskus E.P."/>
            <person name="Schleheck D."/>
        </authorList>
    </citation>
    <scope>FUNCTION</scope>
    <scope>CATALYTIC ACTIVITY</scope>
    <scope>INDUCTION</scope>
    <scope>PATHWAY</scope>
    <source>
        <strain>3_1_6</strain>
    </source>
</reference>
<name>ISLB_BILW3</name>
<sequence length="312" mass="34720">MGSFEDRKATGTVFNIQKYSVHDGPGIRTIVFLKGCPLSCKWCSNPESQASHPQVAYNKGRCIGCHRCIKACEHDAITVNEDGTLSLDRGKCDVCKTLDCAHACPAQGMIIYGENKTVDQILKEVEKDALFYARSGGGMTLSGGEPLMHADIALPLLREARHRRIKTAIETCGCIPWDTLKEAAPYLNYVLFDVKQMDSEKHREGVGVGNELILSNLKKLLTEFPNLHVQVRTPIIPGFNDNDEFAYALGEFLKGYENVGYEALPYHRLGTQKYDFLSREYAMGDVSLPDGVAQRIQRIVDETRGAVTEEKK</sequence>
<accession>E5Y377</accession>
<comment type="function">
    <text evidence="5">Involved in an anaerobic respiration pathway that converts the sulfonate taurine (2-aminoethanesulfonate) to ammonia, acetate and sulfide. Catalyzes activation of the isethionate sulfite-lyase IslA under anaerobic conditions by generation of an organic free radical on a glycine residue, via a homolytic cleavage of S-adenosyl-L-methionine (SAM).</text>
</comment>
<comment type="catalytic activity">
    <reaction evidence="8">
        <text>glycyl-[protein] + reduced [flavodoxin] + S-adenosyl-L-methionine = glycin-2-yl radical-[protein] + semiquinone [flavodoxin] + 5'-deoxyadenosine + L-methionine + H(+)</text>
        <dbReference type="Rhea" id="RHEA:61976"/>
        <dbReference type="Rhea" id="RHEA-COMP:10622"/>
        <dbReference type="Rhea" id="RHEA-COMP:14480"/>
        <dbReference type="Rhea" id="RHEA-COMP:15993"/>
        <dbReference type="Rhea" id="RHEA-COMP:15994"/>
        <dbReference type="ChEBI" id="CHEBI:15378"/>
        <dbReference type="ChEBI" id="CHEBI:17319"/>
        <dbReference type="ChEBI" id="CHEBI:29947"/>
        <dbReference type="ChEBI" id="CHEBI:32722"/>
        <dbReference type="ChEBI" id="CHEBI:57618"/>
        <dbReference type="ChEBI" id="CHEBI:57844"/>
        <dbReference type="ChEBI" id="CHEBI:59789"/>
        <dbReference type="ChEBI" id="CHEBI:140311"/>
    </reaction>
    <physiologicalReaction direction="left-to-right" evidence="8">
        <dbReference type="Rhea" id="RHEA:61977"/>
    </physiologicalReaction>
</comment>
<comment type="cofactor">
    <cofactor evidence="3">
        <name>[4Fe-4S] cluster</name>
        <dbReference type="ChEBI" id="CHEBI:49883"/>
    </cofactor>
    <text evidence="3">Binds 3 [4Fe-4S] clusters. One cluster is coordinated with 3 cysteines and an exchangeable S-adenosyl-L-methionine.</text>
</comment>
<comment type="pathway">
    <text evidence="8">Organosulfur degradation; alkanesulfonate degradation.</text>
</comment>
<comment type="subunit">
    <text evidence="2">Monomer.</text>
</comment>
<comment type="induction">
    <text evidence="5">Highly up-regulated in the presence of taurine or isethionate.</text>
</comment>
<comment type="miscellaneous">
    <text evidence="8">Taurine is an abundant dietary and host-derived molecule whose metabolism to hydrogen sulfide (H2S) by members of the human gut microbiota has many prominent connections to host health and disease. The human gut bacterium and opportunistic pathogen Bilophila wadsworthia produces H2S when respiring sulfite (HSO3-) released from organosulfonate substrates such as taurine and isethionate.</text>
</comment>
<comment type="similarity">
    <text evidence="7">Belongs to the organic radical-activating enzymes family.</text>
</comment>
<gene>
    <name evidence="6" type="primary">islB</name>
    <name evidence="9" type="ORF">HMPREF0179_00638</name>
</gene>